<dbReference type="EC" id="7.1.2.2" evidence="1"/>
<dbReference type="EMBL" id="CP001657">
    <property type="protein sequence ID" value="ACT15269.1"/>
    <property type="molecule type" value="Genomic_DNA"/>
</dbReference>
<dbReference type="RefSeq" id="WP_005976551.1">
    <property type="nucleotide sequence ID" value="NC_012917.1"/>
</dbReference>
<dbReference type="SMR" id="C6DJH0"/>
<dbReference type="STRING" id="561230.PC1_4255"/>
<dbReference type="GeneID" id="93392467"/>
<dbReference type="KEGG" id="pct:PC1_4255"/>
<dbReference type="eggNOG" id="COG0056">
    <property type="taxonomic scope" value="Bacteria"/>
</dbReference>
<dbReference type="HOGENOM" id="CLU_010091_2_1_6"/>
<dbReference type="OrthoDB" id="9803053at2"/>
<dbReference type="Proteomes" id="UP000002736">
    <property type="component" value="Chromosome"/>
</dbReference>
<dbReference type="GO" id="GO:0005886">
    <property type="term" value="C:plasma membrane"/>
    <property type="evidence" value="ECO:0007669"/>
    <property type="project" value="UniProtKB-SubCell"/>
</dbReference>
<dbReference type="GO" id="GO:0045259">
    <property type="term" value="C:proton-transporting ATP synthase complex"/>
    <property type="evidence" value="ECO:0007669"/>
    <property type="project" value="UniProtKB-KW"/>
</dbReference>
<dbReference type="GO" id="GO:0043531">
    <property type="term" value="F:ADP binding"/>
    <property type="evidence" value="ECO:0007669"/>
    <property type="project" value="TreeGrafter"/>
</dbReference>
<dbReference type="GO" id="GO:0005524">
    <property type="term" value="F:ATP binding"/>
    <property type="evidence" value="ECO:0007669"/>
    <property type="project" value="UniProtKB-UniRule"/>
</dbReference>
<dbReference type="GO" id="GO:0046933">
    <property type="term" value="F:proton-transporting ATP synthase activity, rotational mechanism"/>
    <property type="evidence" value="ECO:0007669"/>
    <property type="project" value="UniProtKB-UniRule"/>
</dbReference>
<dbReference type="CDD" id="cd18113">
    <property type="entry name" value="ATP-synt_F1_alpha_C"/>
    <property type="match status" value="1"/>
</dbReference>
<dbReference type="CDD" id="cd18116">
    <property type="entry name" value="ATP-synt_F1_alpha_N"/>
    <property type="match status" value="1"/>
</dbReference>
<dbReference type="CDD" id="cd01132">
    <property type="entry name" value="F1-ATPase_alpha_CD"/>
    <property type="match status" value="1"/>
</dbReference>
<dbReference type="FunFam" id="1.20.150.20:FF:000001">
    <property type="entry name" value="ATP synthase subunit alpha"/>
    <property type="match status" value="1"/>
</dbReference>
<dbReference type="FunFam" id="2.40.30.20:FF:000001">
    <property type="entry name" value="ATP synthase subunit alpha"/>
    <property type="match status" value="1"/>
</dbReference>
<dbReference type="FunFam" id="3.40.50.300:FF:000002">
    <property type="entry name" value="ATP synthase subunit alpha"/>
    <property type="match status" value="1"/>
</dbReference>
<dbReference type="Gene3D" id="2.40.30.20">
    <property type="match status" value="1"/>
</dbReference>
<dbReference type="Gene3D" id="1.20.150.20">
    <property type="entry name" value="ATP synthase alpha/beta chain, C-terminal domain"/>
    <property type="match status" value="1"/>
</dbReference>
<dbReference type="Gene3D" id="3.40.50.300">
    <property type="entry name" value="P-loop containing nucleotide triphosphate hydrolases"/>
    <property type="match status" value="1"/>
</dbReference>
<dbReference type="HAMAP" id="MF_01346">
    <property type="entry name" value="ATP_synth_alpha_bact"/>
    <property type="match status" value="1"/>
</dbReference>
<dbReference type="InterPro" id="IPR023366">
    <property type="entry name" value="ATP_synth_asu-like_sf"/>
</dbReference>
<dbReference type="InterPro" id="IPR000793">
    <property type="entry name" value="ATP_synth_asu_C"/>
</dbReference>
<dbReference type="InterPro" id="IPR038376">
    <property type="entry name" value="ATP_synth_asu_C_sf"/>
</dbReference>
<dbReference type="InterPro" id="IPR033732">
    <property type="entry name" value="ATP_synth_F1_a_nt-bd_dom"/>
</dbReference>
<dbReference type="InterPro" id="IPR005294">
    <property type="entry name" value="ATP_synth_F1_asu"/>
</dbReference>
<dbReference type="InterPro" id="IPR020003">
    <property type="entry name" value="ATPase_a/bsu_AS"/>
</dbReference>
<dbReference type="InterPro" id="IPR004100">
    <property type="entry name" value="ATPase_F1/V1/A1_a/bsu_N"/>
</dbReference>
<dbReference type="InterPro" id="IPR036121">
    <property type="entry name" value="ATPase_F1/V1/A1_a/bsu_N_sf"/>
</dbReference>
<dbReference type="InterPro" id="IPR000194">
    <property type="entry name" value="ATPase_F1/V1/A1_a/bsu_nucl-bd"/>
</dbReference>
<dbReference type="InterPro" id="IPR027417">
    <property type="entry name" value="P-loop_NTPase"/>
</dbReference>
<dbReference type="NCBIfam" id="TIGR00962">
    <property type="entry name" value="atpA"/>
    <property type="match status" value="1"/>
</dbReference>
<dbReference type="NCBIfam" id="NF009884">
    <property type="entry name" value="PRK13343.1"/>
    <property type="match status" value="1"/>
</dbReference>
<dbReference type="PANTHER" id="PTHR48082">
    <property type="entry name" value="ATP SYNTHASE SUBUNIT ALPHA, MITOCHONDRIAL"/>
    <property type="match status" value="1"/>
</dbReference>
<dbReference type="PANTHER" id="PTHR48082:SF2">
    <property type="entry name" value="ATP SYNTHASE SUBUNIT ALPHA, MITOCHONDRIAL"/>
    <property type="match status" value="1"/>
</dbReference>
<dbReference type="Pfam" id="PF00006">
    <property type="entry name" value="ATP-synt_ab"/>
    <property type="match status" value="1"/>
</dbReference>
<dbReference type="Pfam" id="PF00306">
    <property type="entry name" value="ATP-synt_ab_C"/>
    <property type="match status" value="1"/>
</dbReference>
<dbReference type="Pfam" id="PF02874">
    <property type="entry name" value="ATP-synt_ab_N"/>
    <property type="match status" value="1"/>
</dbReference>
<dbReference type="SUPFAM" id="SSF47917">
    <property type="entry name" value="C-terminal domain of alpha and beta subunits of F1 ATP synthase"/>
    <property type="match status" value="1"/>
</dbReference>
<dbReference type="SUPFAM" id="SSF50615">
    <property type="entry name" value="N-terminal domain of alpha and beta subunits of F1 ATP synthase"/>
    <property type="match status" value="1"/>
</dbReference>
<dbReference type="SUPFAM" id="SSF52540">
    <property type="entry name" value="P-loop containing nucleoside triphosphate hydrolases"/>
    <property type="match status" value="1"/>
</dbReference>
<dbReference type="PROSITE" id="PS00152">
    <property type="entry name" value="ATPASE_ALPHA_BETA"/>
    <property type="match status" value="1"/>
</dbReference>
<sequence>MQLNSTEISELIKQRIAQFNVVSEAHNEGTIVSVSDGIIRVHGLADVMQGEMISLPGNRYAIALNLERDSVGAVVMGPYADLAEGMKVKCTGRILEVPVGRGLLGRVVNTLGAPIDGKGALDHDGFSAVEAIAPGVIERQSVDEPVQTGYKSVDAMIPIGRGQRELIIGDRQTGKTALAIDAIINQRDSGIKCVYVAIGQKASTISNVVRKLEEHGALENTIVVVATASESAALQYLAPYAGCAMGEYFRDRGEDALIIYDDLSKQAVAYRQISLLLRRPPGREAYPGDVFYLHSRLLERASRVNADYVEAFTKGEVKGKTGSLTALPIIETQAGDVSAFVPTNVISITDGQIFLESNLFNAGIRPAVNPGISVSRVGGAAQTKIMKKLSGGIRTALAQYRELAAFSQFASDLDDATRKQLSHGQKVTELLKQKQYAPMSVAQQSLVLFAAERGYLEDVELSKVGSFEAALLAYADREHGELLQQIDQTGAYNDEIEGKFKGILDTFKATQSW</sequence>
<proteinExistence type="inferred from homology"/>
<evidence type="ECO:0000255" key="1">
    <source>
        <dbReference type="HAMAP-Rule" id="MF_01346"/>
    </source>
</evidence>
<organism>
    <name type="scientific">Pectobacterium carotovorum subsp. carotovorum (strain PC1)</name>
    <dbReference type="NCBI Taxonomy" id="561230"/>
    <lineage>
        <taxon>Bacteria</taxon>
        <taxon>Pseudomonadati</taxon>
        <taxon>Pseudomonadota</taxon>
        <taxon>Gammaproteobacteria</taxon>
        <taxon>Enterobacterales</taxon>
        <taxon>Pectobacteriaceae</taxon>
        <taxon>Pectobacterium</taxon>
    </lineage>
</organism>
<accession>C6DJH0</accession>
<comment type="function">
    <text evidence="1">Produces ATP from ADP in the presence of a proton gradient across the membrane. The alpha chain is a regulatory subunit.</text>
</comment>
<comment type="catalytic activity">
    <reaction evidence="1">
        <text>ATP + H2O + 4 H(+)(in) = ADP + phosphate + 5 H(+)(out)</text>
        <dbReference type="Rhea" id="RHEA:57720"/>
        <dbReference type="ChEBI" id="CHEBI:15377"/>
        <dbReference type="ChEBI" id="CHEBI:15378"/>
        <dbReference type="ChEBI" id="CHEBI:30616"/>
        <dbReference type="ChEBI" id="CHEBI:43474"/>
        <dbReference type="ChEBI" id="CHEBI:456216"/>
        <dbReference type="EC" id="7.1.2.2"/>
    </reaction>
</comment>
<comment type="subunit">
    <text evidence="1">F-type ATPases have 2 components, CF(1) - the catalytic core - and CF(0) - the membrane proton channel. CF(1) has five subunits: alpha(3), beta(3), gamma(1), delta(1), epsilon(1). CF(0) has three main subunits: a(1), b(2) and c(9-12). The alpha and beta chains form an alternating ring which encloses part of the gamma chain. CF(1) is attached to CF(0) by a central stalk formed by the gamma and epsilon chains, while a peripheral stalk is formed by the delta and b chains.</text>
</comment>
<comment type="subcellular location">
    <subcellularLocation>
        <location evidence="1">Cell inner membrane</location>
        <topology evidence="1">Peripheral membrane protein</topology>
    </subcellularLocation>
</comment>
<comment type="similarity">
    <text evidence="1">Belongs to the ATPase alpha/beta chains family.</text>
</comment>
<reference key="1">
    <citation type="submission" date="2009-07" db="EMBL/GenBank/DDBJ databases">
        <title>Complete sequence of Pectobacterium carotovorum subsp. carotovorum PC1.</title>
        <authorList>
            <consortium name="US DOE Joint Genome Institute"/>
            <person name="Lucas S."/>
            <person name="Copeland A."/>
            <person name="Lapidus A."/>
            <person name="Glavina del Rio T."/>
            <person name="Tice H."/>
            <person name="Bruce D."/>
            <person name="Goodwin L."/>
            <person name="Pitluck S."/>
            <person name="Munk A.C."/>
            <person name="Brettin T."/>
            <person name="Detter J.C."/>
            <person name="Han C."/>
            <person name="Tapia R."/>
            <person name="Larimer F."/>
            <person name="Land M."/>
            <person name="Hauser L."/>
            <person name="Kyrpides N."/>
            <person name="Mikhailova N."/>
            <person name="Balakrishnan V."/>
            <person name="Glasner J."/>
            <person name="Perna N.T."/>
        </authorList>
    </citation>
    <scope>NUCLEOTIDE SEQUENCE [LARGE SCALE GENOMIC DNA]</scope>
    <source>
        <strain>PC1</strain>
    </source>
</reference>
<name>ATPA_PECCP</name>
<gene>
    <name evidence="1" type="primary">atpA</name>
    <name type="ordered locus">PC1_4255</name>
</gene>
<protein>
    <recommendedName>
        <fullName evidence="1">ATP synthase subunit alpha</fullName>
        <ecNumber evidence="1">7.1.2.2</ecNumber>
    </recommendedName>
    <alternativeName>
        <fullName evidence="1">ATP synthase F1 sector subunit alpha</fullName>
    </alternativeName>
    <alternativeName>
        <fullName evidence="1">F-ATPase subunit alpha</fullName>
    </alternativeName>
</protein>
<feature type="chain" id="PRO_1000214813" description="ATP synthase subunit alpha">
    <location>
        <begin position="1"/>
        <end position="513"/>
    </location>
</feature>
<feature type="binding site" evidence="1">
    <location>
        <begin position="169"/>
        <end position="176"/>
    </location>
    <ligand>
        <name>ATP</name>
        <dbReference type="ChEBI" id="CHEBI:30616"/>
    </ligand>
</feature>
<feature type="site" description="Required for activity" evidence="1">
    <location>
        <position position="373"/>
    </location>
</feature>
<keyword id="KW-0066">ATP synthesis</keyword>
<keyword id="KW-0067">ATP-binding</keyword>
<keyword id="KW-0997">Cell inner membrane</keyword>
<keyword id="KW-1003">Cell membrane</keyword>
<keyword id="KW-0139">CF(1)</keyword>
<keyword id="KW-0375">Hydrogen ion transport</keyword>
<keyword id="KW-0406">Ion transport</keyword>
<keyword id="KW-0472">Membrane</keyword>
<keyword id="KW-0547">Nucleotide-binding</keyword>
<keyword id="KW-1278">Translocase</keyword>
<keyword id="KW-0813">Transport</keyword>